<proteinExistence type="inferred from homology"/>
<comment type="function">
    <text evidence="1">Produces a precursor for alginate polymerization. The alginate layer provides a protective barrier against host immune defenses and antibiotics (By similarity).</text>
</comment>
<comment type="catalytic activity">
    <reaction>
        <text>D-mannose 6-phosphate = D-fructose 6-phosphate</text>
        <dbReference type="Rhea" id="RHEA:12356"/>
        <dbReference type="ChEBI" id="CHEBI:58735"/>
        <dbReference type="ChEBI" id="CHEBI:61527"/>
        <dbReference type="EC" id="5.3.1.8"/>
    </reaction>
</comment>
<comment type="catalytic activity">
    <reaction>
        <text>alpha-D-mannose 1-phosphate + GTP + H(+) = GDP-alpha-D-mannose + diphosphate</text>
        <dbReference type="Rhea" id="RHEA:15229"/>
        <dbReference type="ChEBI" id="CHEBI:15378"/>
        <dbReference type="ChEBI" id="CHEBI:33019"/>
        <dbReference type="ChEBI" id="CHEBI:37565"/>
        <dbReference type="ChEBI" id="CHEBI:57527"/>
        <dbReference type="ChEBI" id="CHEBI:58409"/>
        <dbReference type="EC" id="2.7.7.13"/>
    </reaction>
</comment>
<comment type="cofactor">
    <cofactor evidence="1">
        <name>Co(2+)</name>
        <dbReference type="ChEBI" id="CHEBI:48828"/>
    </cofactor>
    <text evidence="1">Co(2+) (for PMI).</text>
</comment>
<comment type="pathway">
    <text>Nucleotide-sugar biosynthesis; GDP-alpha-D-mannose biosynthesis; GDP-alpha-D-mannose from alpha-D-mannose 1-phosphate (GTP route): step 1/1.</text>
</comment>
<comment type="pathway">
    <text>Nucleotide-sugar biosynthesis; GDP-alpha-D-mannose biosynthesis; alpha-D-mannose 1-phosphate from D-fructose 6-phosphate: step 1/2.</text>
</comment>
<comment type="subunit">
    <text evidence="1">Monomer.</text>
</comment>
<comment type="similarity">
    <text evidence="2">Belongs to the mannose-6-phosphate isomerase type 2 family.</text>
</comment>
<accession>Q887Q9</accession>
<reference key="1">
    <citation type="journal article" date="2003" name="Proc. Natl. Acad. Sci. U.S.A.">
        <title>The complete genome sequence of the Arabidopsis and tomato pathogen Pseudomonas syringae pv. tomato DC3000.</title>
        <authorList>
            <person name="Buell C.R."/>
            <person name="Joardar V."/>
            <person name="Lindeberg M."/>
            <person name="Selengut J."/>
            <person name="Paulsen I.T."/>
            <person name="Gwinn M.L."/>
            <person name="Dodson R.J."/>
            <person name="DeBoy R.T."/>
            <person name="Durkin A.S."/>
            <person name="Kolonay J.F."/>
            <person name="Madupu R."/>
            <person name="Daugherty S.C."/>
            <person name="Brinkac L.M."/>
            <person name="Beanan M.J."/>
            <person name="Haft D.H."/>
            <person name="Nelson W.C."/>
            <person name="Davidsen T.M."/>
            <person name="Zafar N."/>
            <person name="Zhou L."/>
            <person name="Liu J."/>
            <person name="Yuan Q."/>
            <person name="Khouri H.M."/>
            <person name="Fedorova N.B."/>
            <person name="Tran B."/>
            <person name="Russell D."/>
            <person name="Berry K.J."/>
            <person name="Utterback T.R."/>
            <person name="Van Aken S.E."/>
            <person name="Feldblyum T.V."/>
            <person name="D'Ascenzo M."/>
            <person name="Deng W.-L."/>
            <person name="Ramos A.R."/>
            <person name="Alfano J.R."/>
            <person name="Cartinhour S."/>
            <person name="Chatterjee A.K."/>
            <person name="Delaney T.P."/>
            <person name="Lazarowitz S.G."/>
            <person name="Martin G.B."/>
            <person name="Schneider D.J."/>
            <person name="Tang X."/>
            <person name="Bender C.L."/>
            <person name="White O."/>
            <person name="Fraser C.M."/>
            <person name="Collmer A."/>
        </authorList>
    </citation>
    <scope>NUCLEOTIDE SEQUENCE [LARGE SCALE GENOMIC DNA]</scope>
    <source>
        <strain>ATCC BAA-871 / DC3000</strain>
    </source>
</reference>
<dbReference type="EC" id="5.3.1.8"/>
<dbReference type="EC" id="2.7.7.13"/>
<dbReference type="EMBL" id="AE016853">
    <property type="protein sequence ID" value="AAO54757.1"/>
    <property type="molecule type" value="Genomic_DNA"/>
</dbReference>
<dbReference type="RefSeq" id="NP_791062.1">
    <property type="nucleotide sequence ID" value="NC_004578.1"/>
</dbReference>
<dbReference type="RefSeq" id="WP_007244046.1">
    <property type="nucleotide sequence ID" value="NC_004578.1"/>
</dbReference>
<dbReference type="SMR" id="Q887Q9"/>
<dbReference type="STRING" id="223283.PSPTO_1232"/>
<dbReference type="GeneID" id="1182868"/>
<dbReference type="KEGG" id="pst:PSPTO_1232"/>
<dbReference type="PATRIC" id="fig|223283.9.peg.1253"/>
<dbReference type="eggNOG" id="COG0662">
    <property type="taxonomic scope" value="Bacteria"/>
</dbReference>
<dbReference type="eggNOG" id="COG0836">
    <property type="taxonomic scope" value="Bacteria"/>
</dbReference>
<dbReference type="HOGENOM" id="CLU_035527_1_0_6"/>
<dbReference type="OrthoDB" id="9806359at2"/>
<dbReference type="PhylomeDB" id="Q887Q9"/>
<dbReference type="UniPathway" id="UPA00126">
    <property type="reaction ID" value="UER00423"/>
</dbReference>
<dbReference type="UniPathway" id="UPA00126">
    <property type="reaction ID" value="UER00930"/>
</dbReference>
<dbReference type="Proteomes" id="UP000002515">
    <property type="component" value="Chromosome"/>
</dbReference>
<dbReference type="GO" id="GO:0005525">
    <property type="term" value="F:GTP binding"/>
    <property type="evidence" value="ECO:0007669"/>
    <property type="project" value="UniProtKB-KW"/>
</dbReference>
<dbReference type="GO" id="GO:0004475">
    <property type="term" value="F:mannose-1-phosphate guanylyltransferase (GTP) activity"/>
    <property type="evidence" value="ECO:0007669"/>
    <property type="project" value="UniProtKB-EC"/>
</dbReference>
<dbReference type="GO" id="GO:0004476">
    <property type="term" value="F:mannose-6-phosphate isomerase activity"/>
    <property type="evidence" value="ECO:0007669"/>
    <property type="project" value="UniProtKB-EC"/>
</dbReference>
<dbReference type="GO" id="GO:0042121">
    <property type="term" value="P:alginic acid biosynthetic process"/>
    <property type="evidence" value="ECO:0007669"/>
    <property type="project" value="UniProtKB-KW"/>
</dbReference>
<dbReference type="GO" id="GO:0009298">
    <property type="term" value="P:GDP-mannose biosynthetic process"/>
    <property type="evidence" value="ECO:0007669"/>
    <property type="project" value="UniProtKB-UniPathway"/>
</dbReference>
<dbReference type="CDD" id="cd02213">
    <property type="entry name" value="cupin_PMI_typeII_C"/>
    <property type="match status" value="1"/>
</dbReference>
<dbReference type="CDD" id="cd02509">
    <property type="entry name" value="GDP-M1P_Guanylyltransferase"/>
    <property type="match status" value="1"/>
</dbReference>
<dbReference type="FunFam" id="3.90.550.10:FF:000046">
    <property type="entry name" value="Mannose-1-phosphate guanylyltransferase (GDP)"/>
    <property type="match status" value="1"/>
</dbReference>
<dbReference type="FunFam" id="2.60.120.10:FF:000032">
    <property type="entry name" value="Mannose-1-phosphate guanylyltransferase/mannose-6-phosphate isomerase"/>
    <property type="match status" value="1"/>
</dbReference>
<dbReference type="Gene3D" id="2.60.120.10">
    <property type="entry name" value="Jelly Rolls"/>
    <property type="match status" value="1"/>
</dbReference>
<dbReference type="Gene3D" id="3.90.550.10">
    <property type="entry name" value="Spore Coat Polysaccharide Biosynthesis Protein SpsA, Chain A"/>
    <property type="match status" value="1"/>
</dbReference>
<dbReference type="InterPro" id="IPR049577">
    <property type="entry name" value="GMPP_N"/>
</dbReference>
<dbReference type="InterPro" id="IPR006375">
    <property type="entry name" value="Man1P_GuaTrfase/Man6P_Isoase"/>
</dbReference>
<dbReference type="InterPro" id="IPR001538">
    <property type="entry name" value="Man6P_isomerase-2_C"/>
</dbReference>
<dbReference type="InterPro" id="IPR054566">
    <property type="entry name" value="ManC/GMP-like_b-helix"/>
</dbReference>
<dbReference type="InterPro" id="IPR051161">
    <property type="entry name" value="Mannose-6P_isomerase_type2"/>
</dbReference>
<dbReference type="InterPro" id="IPR005835">
    <property type="entry name" value="NTP_transferase_dom"/>
</dbReference>
<dbReference type="InterPro" id="IPR029044">
    <property type="entry name" value="Nucleotide-diphossugar_trans"/>
</dbReference>
<dbReference type="InterPro" id="IPR014710">
    <property type="entry name" value="RmlC-like_jellyroll"/>
</dbReference>
<dbReference type="InterPro" id="IPR011051">
    <property type="entry name" value="RmlC_Cupin_sf"/>
</dbReference>
<dbReference type="NCBIfam" id="TIGR01479">
    <property type="entry name" value="GMP_PMI"/>
    <property type="match status" value="1"/>
</dbReference>
<dbReference type="PANTHER" id="PTHR46390">
    <property type="entry name" value="MANNOSE-1-PHOSPHATE GUANYLYLTRANSFERASE"/>
    <property type="match status" value="1"/>
</dbReference>
<dbReference type="PANTHER" id="PTHR46390:SF1">
    <property type="entry name" value="MANNOSE-1-PHOSPHATE GUANYLYLTRANSFERASE"/>
    <property type="match status" value="1"/>
</dbReference>
<dbReference type="Pfam" id="PF22640">
    <property type="entry name" value="ManC_GMP_beta-helix"/>
    <property type="match status" value="1"/>
</dbReference>
<dbReference type="Pfam" id="PF01050">
    <property type="entry name" value="MannoseP_isomer"/>
    <property type="match status" value="1"/>
</dbReference>
<dbReference type="Pfam" id="PF00483">
    <property type="entry name" value="NTP_transferase"/>
    <property type="match status" value="1"/>
</dbReference>
<dbReference type="SUPFAM" id="SSF53448">
    <property type="entry name" value="Nucleotide-diphospho-sugar transferases"/>
    <property type="match status" value="1"/>
</dbReference>
<dbReference type="SUPFAM" id="SSF51182">
    <property type="entry name" value="RmlC-like cupins"/>
    <property type="match status" value="1"/>
</dbReference>
<evidence type="ECO:0000250" key="1"/>
<evidence type="ECO:0000305" key="2"/>
<feature type="chain" id="PRO_0000194251" description="Alginate biosynthesis protein AlgA">
    <location>
        <begin position="1"/>
        <end position="483"/>
    </location>
</feature>
<sequence length="483" mass="53563">MIPVILSGGSGSRLWPLSRKQFPKQFLALTGEHTLFQQTLQRLVFEGMQEPIVVCNKDHRFIVNEQLAALNLETQAILMEPFGRNTAPAVALTAMKLVNEGNDGLMLVLPADHVIEDQKALQRALALATVTAERGEMVLFGVPANKPETGYGYIKSTADALLPEGVSRVSQFVEKPDEKRAKEFVEAGGYYWNSGMFLFRASRFLEELKKHDPDIYDTCLLTLERSVQDGDALEIDASTFACCPDNSIDYAVMEKTQRACVVPLSAGWSDVGCWSSLWEVNAKDAHGNVTKGDVVIQDSRNCMIHGNGKLVSVIGLDNIVVVETKDAMMIAHKDKVQGVKQMVATLNEQGRTETQNHLEVYRPWGSYDSVDMGGRFQVKRISVKPGACLSLQMHHHRAEHWIVVSGTAQVTCDENVFLLTENQSTYIPIASVHRLRNPGKIPLEIIEVQSGSYLGEDDIERFEDIYGRSNALEAGVKTQTIAR</sequence>
<name>ALGA_PSESM</name>
<gene>
    <name type="primary">algA</name>
    <name type="ordered locus">PSPTO_1232</name>
</gene>
<keyword id="KW-0016">Alginate biosynthesis</keyword>
<keyword id="KW-0170">Cobalt</keyword>
<keyword id="KW-0342">GTP-binding</keyword>
<keyword id="KW-0413">Isomerase</keyword>
<keyword id="KW-0511">Multifunctional enzyme</keyword>
<keyword id="KW-0547">Nucleotide-binding</keyword>
<keyword id="KW-0548">Nucleotidyltransferase</keyword>
<keyword id="KW-1185">Reference proteome</keyword>
<keyword id="KW-0808">Transferase</keyword>
<organism>
    <name type="scientific">Pseudomonas syringae pv. tomato (strain ATCC BAA-871 / DC3000)</name>
    <dbReference type="NCBI Taxonomy" id="223283"/>
    <lineage>
        <taxon>Bacteria</taxon>
        <taxon>Pseudomonadati</taxon>
        <taxon>Pseudomonadota</taxon>
        <taxon>Gammaproteobacteria</taxon>
        <taxon>Pseudomonadales</taxon>
        <taxon>Pseudomonadaceae</taxon>
        <taxon>Pseudomonas</taxon>
    </lineage>
</organism>
<protein>
    <recommendedName>
        <fullName>Alginate biosynthesis protein AlgA</fullName>
    </recommendedName>
    <domain>
        <recommendedName>
            <fullName>Mannose-6-phosphate isomerase</fullName>
            <ecNumber>5.3.1.8</ecNumber>
        </recommendedName>
        <alternativeName>
            <fullName>Phosphohexomutase</fullName>
        </alternativeName>
        <alternativeName>
            <fullName>Phosphomannose isomerase</fullName>
            <shortName>PMI</shortName>
        </alternativeName>
    </domain>
    <domain>
        <recommendedName>
            <fullName>Mannose-1-phosphate guanylyltransferase</fullName>
            <ecNumber>2.7.7.13</ecNumber>
        </recommendedName>
        <alternativeName>
            <fullName>GDP-mannose pyrophosphorylase</fullName>
            <shortName>GMP</shortName>
            <shortName>GMPP</shortName>
        </alternativeName>
        <alternativeName>
            <fullName>GTP--mannose-1-phosphate guanylyltransferase</fullName>
        </alternativeName>
    </domain>
</protein>